<protein>
    <recommendedName>
        <fullName evidence="1">Tryptophan synthase beta chain</fullName>
        <ecNumber evidence="1">4.2.1.20</ecNumber>
    </recommendedName>
</protein>
<reference key="1">
    <citation type="submission" date="2007-10" db="EMBL/GenBank/DDBJ databases">
        <title>Complete sequence of Shewanella pealeana ATCC 700345.</title>
        <authorList>
            <consortium name="US DOE Joint Genome Institute"/>
            <person name="Copeland A."/>
            <person name="Lucas S."/>
            <person name="Lapidus A."/>
            <person name="Barry K."/>
            <person name="Glavina del Rio T."/>
            <person name="Dalin E."/>
            <person name="Tice H."/>
            <person name="Pitluck S."/>
            <person name="Chertkov O."/>
            <person name="Brettin T."/>
            <person name="Bruce D."/>
            <person name="Detter J.C."/>
            <person name="Han C."/>
            <person name="Schmutz J."/>
            <person name="Larimer F."/>
            <person name="Land M."/>
            <person name="Hauser L."/>
            <person name="Kyrpides N."/>
            <person name="Kim E."/>
            <person name="Zhao J.-S.Z."/>
            <person name="Manno D."/>
            <person name="Hawari J."/>
            <person name="Richardson P."/>
        </authorList>
    </citation>
    <scope>NUCLEOTIDE SEQUENCE [LARGE SCALE GENOMIC DNA]</scope>
    <source>
        <strain>ATCC 700345 / ANG-SQ1</strain>
    </source>
</reference>
<name>TRPB_SHEPA</name>
<evidence type="ECO:0000255" key="1">
    <source>
        <dbReference type="HAMAP-Rule" id="MF_00133"/>
    </source>
</evidence>
<feature type="chain" id="PRO_1000076408" description="Tryptophan synthase beta chain">
    <location>
        <begin position="1"/>
        <end position="409"/>
    </location>
</feature>
<feature type="modified residue" description="N6-(pyridoxal phosphate)lysine" evidence="1">
    <location>
        <position position="86"/>
    </location>
</feature>
<dbReference type="EC" id="4.2.1.20" evidence="1"/>
<dbReference type="EMBL" id="CP000851">
    <property type="protein sequence ID" value="ABV86911.1"/>
    <property type="molecule type" value="Genomic_DNA"/>
</dbReference>
<dbReference type="RefSeq" id="WP_012154835.1">
    <property type="nucleotide sequence ID" value="NC_009901.1"/>
</dbReference>
<dbReference type="SMR" id="A8H2X4"/>
<dbReference type="STRING" id="398579.Spea_1586"/>
<dbReference type="KEGG" id="spl:Spea_1586"/>
<dbReference type="eggNOG" id="COG0133">
    <property type="taxonomic scope" value="Bacteria"/>
</dbReference>
<dbReference type="HOGENOM" id="CLU_016734_3_1_6"/>
<dbReference type="OrthoDB" id="9766131at2"/>
<dbReference type="UniPathway" id="UPA00035">
    <property type="reaction ID" value="UER00044"/>
</dbReference>
<dbReference type="Proteomes" id="UP000002608">
    <property type="component" value="Chromosome"/>
</dbReference>
<dbReference type="GO" id="GO:0005737">
    <property type="term" value="C:cytoplasm"/>
    <property type="evidence" value="ECO:0007669"/>
    <property type="project" value="TreeGrafter"/>
</dbReference>
<dbReference type="GO" id="GO:0004834">
    <property type="term" value="F:tryptophan synthase activity"/>
    <property type="evidence" value="ECO:0007669"/>
    <property type="project" value="UniProtKB-UniRule"/>
</dbReference>
<dbReference type="CDD" id="cd06446">
    <property type="entry name" value="Trp-synth_B"/>
    <property type="match status" value="1"/>
</dbReference>
<dbReference type="FunFam" id="3.40.50.1100:FF:000001">
    <property type="entry name" value="Tryptophan synthase beta chain"/>
    <property type="match status" value="1"/>
</dbReference>
<dbReference type="FunFam" id="3.40.50.1100:FF:000004">
    <property type="entry name" value="Tryptophan synthase beta chain"/>
    <property type="match status" value="1"/>
</dbReference>
<dbReference type="Gene3D" id="3.40.50.1100">
    <property type="match status" value="2"/>
</dbReference>
<dbReference type="HAMAP" id="MF_00133">
    <property type="entry name" value="Trp_synth_beta"/>
    <property type="match status" value="1"/>
</dbReference>
<dbReference type="InterPro" id="IPR006653">
    <property type="entry name" value="Trp_synth_b_CS"/>
</dbReference>
<dbReference type="InterPro" id="IPR006654">
    <property type="entry name" value="Trp_synth_beta"/>
</dbReference>
<dbReference type="InterPro" id="IPR023026">
    <property type="entry name" value="Trp_synth_beta/beta-like"/>
</dbReference>
<dbReference type="InterPro" id="IPR001926">
    <property type="entry name" value="TrpB-like_PALP"/>
</dbReference>
<dbReference type="InterPro" id="IPR036052">
    <property type="entry name" value="TrpB-like_PALP_sf"/>
</dbReference>
<dbReference type="NCBIfam" id="TIGR00263">
    <property type="entry name" value="trpB"/>
    <property type="match status" value="1"/>
</dbReference>
<dbReference type="PANTHER" id="PTHR48077:SF3">
    <property type="entry name" value="TRYPTOPHAN SYNTHASE"/>
    <property type="match status" value="1"/>
</dbReference>
<dbReference type="PANTHER" id="PTHR48077">
    <property type="entry name" value="TRYPTOPHAN SYNTHASE-RELATED"/>
    <property type="match status" value="1"/>
</dbReference>
<dbReference type="Pfam" id="PF00291">
    <property type="entry name" value="PALP"/>
    <property type="match status" value="1"/>
</dbReference>
<dbReference type="PIRSF" id="PIRSF001413">
    <property type="entry name" value="Trp_syn_beta"/>
    <property type="match status" value="1"/>
</dbReference>
<dbReference type="SUPFAM" id="SSF53686">
    <property type="entry name" value="Tryptophan synthase beta subunit-like PLP-dependent enzymes"/>
    <property type="match status" value="1"/>
</dbReference>
<dbReference type="PROSITE" id="PS00168">
    <property type="entry name" value="TRP_SYNTHASE_BETA"/>
    <property type="match status" value="1"/>
</dbReference>
<gene>
    <name evidence="1" type="primary">trpB</name>
    <name type="ordered locus">Spea_1586</name>
</gene>
<organism>
    <name type="scientific">Shewanella pealeana (strain ATCC 700345 / ANG-SQ1)</name>
    <dbReference type="NCBI Taxonomy" id="398579"/>
    <lineage>
        <taxon>Bacteria</taxon>
        <taxon>Pseudomonadati</taxon>
        <taxon>Pseudomonadota</taxon>
        <taxon>Gammaproteobacteria</taxon>
        <taxon>Alteromonadales</taxon>
        <taxon>Shewanellaceae</taxon>
        <taxon>Shewanella</taxon>
    </lineage>
</organism>
<accession>A8H2X4</accession>
<proteinExistence type="inferred from homology"/>
<keyword id="KW-0028">Amino-acid biosynthesis</keyword>
<keyword id="KW-0057">Aromatic amino acid biosynthesis</keyword>
<keyword id="KW-0456">Lyase</keyword>
<keyword id="KW-0663">Pyridoxal phosphate</keyword>
<keyword id="KW-1185">Reference proteome</keyword>
<keyword id="KW-0822">Tryptophan biosynthesis</keyword>
<comment type="function">
    <text evidence="1">The beta subunit is responsible for the synthesis of L-tryptophan from indole and L-serine.</text>
</comment>
<comment type="catalytic activity">
    <reaction evidence="1">
        <text>(1S,2R)-1-C-(indol-3-yl)glycerol 3-phosphate + L-serine = D-glyceraldehyde 3-phosphate + L-tryptophan + H2O</text>
        <dbReference type="Rhea" id="RHEA:10532"/>
        <dbReference type="ChEBI" id="CHEBI:15377"/>
        <dbReference type="ChEBI" id="CHEBI:33384"/>
        <dbReference type="ChEBI" id="CHEBI:57912"/>
        <dbReference type="ChEBI" id="CHEBI:58866"/>
        <dbReference type="ChEBI" id="CHEBI:59776"/>
        <dbReference type="EC" id="4.2.1.20"/>
    </reaction>
</comment>
<comment type="cofactor">
    <cofactor evidence="1">
        <name>pyridoxal 5'-phosphate</name>
        <dbReference type="ChEBI" id="CHEBI:597326"/>
    </cofactor>
</comment>
<comment type="pathway">
    <text evidence="1">Amino-acid biosynthesis; L-tryptophan biosynthesis; L-tryptophan from chorismate: step 5/5.</text>
</comment>
<comment type="subunit">
    <text evidence="1">Tetramer of two alpha and two beta chains.</text>
</comment>
<comment type="similarity">
    <text evidence="1">Belongs to the TrpB family.</text>
</comment>
<sequence length="409" mass="44265">MSKLNPYFGEYGGMYVPQILMPALKQLETAFIEAQEDESFQQEFTELLKNYAGRPTALTLTRNLSPNPLTKIYLKREDLLHGGAHKTNQVLGQALLAKRMGKKEIIAETGAGQHGVATALACALLGLKCKVYMGAKDVERQSPNVFRMKLMGAEVIPVTSGSATLKDACNEAMRDWSGSYDKAHYLLGTAAGPHPFPTIVREFQRMIGEETKSQILEREGRLPDAVIACVGGGSNAIGMFADFIDEEEVALIGVEPAGKGIDTPMHGAPLKHGKTGIFFGMKAPLMQDSEGQIEESYSVSAGLDFPSVGPQHAHLAATGRATYESATDDEALEAFQLLARSEGIIPALESAHALAYAVKLAKEATKETILVVNLSGRGDKDIFTVADILEQQKVEQQEAEQQQTNNQNN</sequence>